<accession>A9ISG4</accession>
<sequence>MNHEVMNLFNPQAPAQTFDSIRISIASPEKILSWSYGEIKKPETINYRTFKPERDGLFCARIFGPIKDYECLCGKYKRMKYKGIICEKCGVEVTLSRVRRERMGHIELAAPVAHIWFLKSLPGRISTLLDLTLKDIERVLYFENYIVTEPGLTSLKLHQLLSEEEYMLAIDEFGEDQFTAMIGAEAIYELLAGMELDKIANDLRLELAETTSELKQKKLIKRLKIVENFLESGNKPEWMIMKTIPVIPPDLRPLVPLDGGRFATSDLNDLYRRVINRNNRLKRLIELRAPGIIVRNEKRMVQEAVDALFDNGRRGRVITGANKRPLKSLSDMLKGKQGRFRQNLLGKRVDYSGRSVIVTGPELKLHQCGLPKKMALELFKPFIYARLDAKGYSSTVKQAKKLVEKEHPEVWDILDEVIREHPVLLNRAPTLHRLGIQAFEPILIEGKAIQLHPLVCTAFNADFDGDQMAVHVPLSLEAQLEARVLMMSTNNILHPANGAPIIVPSQDMVLGLYYLSIVSEKEPGEGMAFSDIGELHYALENKVVTLHTKIKGRVKNMGKDGKEVAKLYDTTPGRLIIGELLPRNPNISFDIVNQEMTKKNISKMIDYVYRHCGQKETVIFCDRIMQLGFSYACRAGISFGKDDMVIPDSKSRLVAETEALAKEYEQQYNDGLITQGEKYNKVVDAWGKCTDRVADEMMKRIQAVDFDPKTGRQRPMNSIYMMSHSGARGSANQMRQLAGMRGLMAKPSGEIIETPIISNFKEGLTVNEYFNSTHGARKGLADTALKTANSGYLTRRLVDVAQDAIISAVDCGTAKGLTMQPIVDAGQIVASLGQRILGRTALVDILHPVSGEVILEGGAMIEEADVAKIEEAGIQSVQIRSALTCETRLGVCAKCYGRDLARGTPVNQGEAVGVIAAQSIGEPGTQLTMRTFHLGGTAQVVDSSYLEASYEGTVEIRNRNVARNSEGHLVVMGRNMAILIKDELGKERVVHRISYGAHIFVDDGDVVKRGQRIAEWDPYTRPILTEVEGYVGFEDMVDGLSVTETADESTGITKRLVIDWRANPRGAELKPAIIIHADKEGKSIAKLYKGGEARYMMSVETILSVELGAHVKAGDVIARLPMESAKTKDITGGLPRVAELFEARRPKDHAIIAEVSGTIRFGRGYKNKRRIIIEPNDETLEPVEYLIPKGKLFHFQEGDQIEKGDYILDGNPAPHDILAIKGVEALASYLVNEIQEVYRLQGVLINDKHIEVIVRQMLQKVEITESGDSGYIPGDNVDRIELDEINDNLIAEGKKPASGNPILLGITKASLQTPSFISAASFQETTRVLTEAAVSGKIDTLQGLKENVIVGRLIPAGTGGTISQIRRIAAVRDDLIVDEQRKSSNNEVAKAMLTNMTAESVSK</sequence>
<organism>
    <name type="scientific">Bartonella tribocorum (strain CIP 105476 / IBS 506)</name>
    <dbReference type="NCBI Taxonomy" id="382640"/>
    <lineage>
        <taxon>Bacteria</taxon>
        <taxon>Pseudomonadati</taxon>
        <taxon>Pseudomonadota</taxon>
        <taxon>Alphaproteobacteria</taxon>
        <taxon>Hyphomicrobiales</taxon>
        <taxon>Bartonellaceae</taxon>
        <taxon>Bartonella</taxon>
    </lineage>
</organism>
<evidence type="ECO:0000255" key="1">
    <source>
        <dbReference type="HAMAP-Rule" id="MF_01322"/>
    </source>
</evidence>
<protein>
    <recommendedName>
        <fullName evidence="1">DNA-directed RNA polymerase subunit beta'</fullName>
        <shortName evidence="1">RNAP subunit beta'</shortName>
        <ecNumber evidence="1">2.7.7.6</ecNumber>
    </recommendedName>
    <alternativeName>
        <fullName evidence="1">RNA polymerase subunit beta'</fullName>
    </alternativeName>
    <alternativeName>
        <fullName evidence="1">Transcriptase subunit beta'</fullName>
    </alternativeName>
</protein>
<gene>
    <name evidence="1" type="primary">rpoC</name>
    <name type="ordered locus">BT_0896</name>
</gene>
<feature type="chain" id="PRO_0000353296" description="DNA-directed RNA polymerase subunit beta'">
    <location>
        <begin position="1"/>
        <end position="1403"/>
    </location>
</feature>
<feature type="binding site" evidence="1">
    <location>
        <position position="71"/>
    </location>
    <ligand>
        <name>Zn(2+)</name>
        <dbReference type="ChEBI" id="CHEBI:29105"/>
        <label>1</label>
    </ligand>
</feature>
<feature type="binding site" evidence="1">
    <location>
        <position position="73"/>
    </location>
    <ligand>
        <name>Zn(2+)</name>
        <dbReference type="ChEBI" id="CHEBI:29105"/>
        <label>1</label>
    </ligand>
</feature>
<feature type="binding site" evidence="1">
    <location>
        <position position="86"/>
    </location>
    <ligand>
        <name>Zn(2+)</name>
        <dbReference type="ChEBI" id="CHEBI:29105"/>
        <label>1</label>
    </ligand>
</feature>
<feature type="binding site" evidence="1">
    <location>
        <position position="89"/>
    </location>
    <ligand>
        <name>Zn(2+)</name>
        <dbReference type="ChEBI" id="CHEBI:29105"/>
        <label>1</label>
    </ligand>
</feature>
<feature type="binding site" evidence="1">
    <location>
        <position position="462"/>
    </location>
    <ligand>
        <name>Mg(2+)</name>
        <dbReference type="ChEBI" id="CHEBI:18420"/>
    </ligand>
</feature>
<feature type="binding site" evidence="1">
    <location>
        <position position="464"/>
    </location>
    <ligand>
        <name>Mg(2+)</name>
        <dbReference type="ChEBI" id="CHEBI:18420"/>
    </ligand>
</feature>
<feature type="binding site" evidence="1">
    <location>
        <position position="466"/>
    </location>
    <ligand>
        <name>Mg(2+)</name>
        <dbReference type="ChEBI" id="CHEBI:18420"/>
    </ligand>
</feature>
<feature type="binding site" evidence="1">
    <location>
        <position position="811"/>
    </location>
    <ligand>
        <name>Zn(2+)</name>
        <dbReference type="ChEBI" id="CHEBI:29105"/>
        <label>2</label>
    </ligand>
</feature>
<feature type="binding site" evidence="1">
    <location>
        <position position="885"/>
    </location>
    <ligand>
        <name>Zn(2+)</name>
        <dbReference type="ChEBI" id="CHEBI:29105"/>
        <label>2</label>
    </ligand>
</feature>
<feature type="binding site" evidence="1">
    <location>
        <position position="892"/>
    </location>
    <ligand>
        <name>Zn(2+)</name>
        <dbReference type="ChEBI" id="CHEBI:29105"/>
        <label>2</label>
    </ligand>
</feature>
<feature type="binding site" evidence="1">
    <location>
        <position position="895"/>
    </location>
    <ligand>
        <name>Zn(2+)</name>
        <dbReference type="ChEBI" id="CHEBI:29105"/>
        <label>2</label>
    </ligand>
</feature>
<dbReference type="EC" id="2.7.7.6" evidence="1"/>
<dbReference type="EMBL" id="AM260525">
    <property type="protein sequence ID" value="CAK01299.1"/>
    <property type="molecule type" value="Genomic_DNA"/>
</dbReference>
<dbReference type="RefSeq" id="WP_012231481.1">
    <property type="nucleotide sequence ID" value="NC_010161.1"/>
</dbReference>
<dbReference type="SMR" id="A9ISG4"/>
<dbReference type="KEGG" id="btr:BT_0896"/>
<dbReference type="eggNOG" id="COG0086">
    <property type="taxonomic scope" value="Bacteria"/>
</dbReference>
<dbReference type="HOGENOM" id="CLU_000524_3_1_5"/>
<dbReference type="Proteomes" id="UP000001592">
    <property type="component" value="Chromosome"/>
</dbReference>
<dbReference type="GO" id="GO:0000428">
    <property type="term" value="C:DNA-directed RNA polymerase complex"/>
    <property type="evidence" value="ECO:0007669"/>
    <property type="project" value="UniProtKB-KW"/>
</dbReference>
<dbReference type="GO" id="GO:0003677">
    <property type="term" value="F:DNA binding"/>
    <property type="evidence" value="ECO:0007669"/>
    <property type="project" value="UniProtKB-UniRule"/>
</dbReference>
<dbReference type="GO" id="GO:0003899">
    <property type="term" value="F:DNA-directed RNA polymerase activity"/>
    <property type="evidence" value="ECO:0007669"/>
    <property type="project" value="UniProtKB-UniRule"/>
</dbReference>
<dbReference type="GO" id="GO:0000287">
    <property type="term" value="F:magnesium ion binding"/>
    <property type="evidence" value="ECO:0007669"/>
    <property type="project" value="UniProtKB-UniRule"/>
</dbReference>
<dbReference type="GO" id="GO:0008270">
    <property type="term" value="F:zinc ion binding"/>
    <property type="evidence" value="ECO:0007669"/>
    <property type="project" value="UniProtKB-UniRule"/>
</dbReference>
<dbReference type="GO" id="GO:0006351">
    <property type="term" value="P:DNA-templated transcription"/>
    <property type="evidence" value="ECO:0007669"/>
    <property type="project" value="UniProtKB-UniRule"/>
</dbReference>
<dbReference type="CDD" id="cd02655">
    <property type="entry name" value="RNAP_beta'_C"/>
    <property type="match status" value="1"/>
</dbReference>
<dbReference type="CDD" id="cd01609">
    <property type="entry name" value="RNAP_beta'_N"/>
    <property type="match status" value="1"/>
</dbReference>
<dbReference type="Gene3D" id="1.10.132.30">
    <property type="match status" value="1"/>
</dbReference>
<dbReference type="Gene3D" id="1.10.150.390">
    <property type="match status" value="1"/>
</dbReference>
<dbReference type="Gene3D" id="1.10.1790.20">
    <property type="match status" value="1"/>
</dbReference>
<dbReference type="Gene3D" id="1.10.40.90">
    <property type="match status" value="1"/>
</dbReference>
<dbReference type="Gene3D" id="2.40.40.20">
    <property type="match status" value="1"/>
</dbReference>
<dbReference type="Gene3D" id="2.40.50.100">
    <property type="match status" value="3"/>
</dbReference>
<dbReference type="Gene3D" id="4.10.860.120">
    <property type="entry name" value="RNA polymerase II, clamp domain"/>
    <property type="match status" value="1"/>
</dbReference>
<dbReference type="Gene3D" id="1.10.274.100">
    <property type="entry name" value="RNA polymerase Rpb1, domain 3"/>
    <property type="match status" value="2"/>
</dbReference>
<dbReference type="HAMAP" id="MF_01322">
    <property type="entry name" value="RNApol_bact_RpoC"/>
    <property type="match status" value="1"/>
</dbReference>
<dbReference type="InterPro" id="IPR045867">
    <property type="entry name" value="DNA-dir_RpoC_beta_prime"/>
</dbReference>
<dbReference type="InterPro" id="IPR012754">
    <property type="entry name" value="DNA-dir_RpoC_beta_prime_bact"/>
</dbReference>
<dbReference type="InterPro" id="IPR000722">
    <property type="entry name" value="RNA_pol_asu"/>
</dbReference>
<dbReference type="InterPro" id="IPR006592">
    <property type="entry name" value="RNA_pol_N"/>
</dbReference>
<dbReference type="InterPro" id="IPR007080">
    <property type="entry name" value="RNA_pol_Rpb1_1"/>
</dbReference>
<dbReference type="InterPro" id="IPR007066">
    <property type="entry name" value="RNA_pol_Rpb1_3"/>
</dbReference>
<dbReference type="InterPro" id="IPR042102">
    <property type="entry name" value="RNA_pol_Rpb1_3_sf"/>
</dbReference>
<dbReference type="InterPro" id="IPR007083">
    <property type="entry name" value="RNA_pol_Rpb1_4"/>
</dbReference>
<dbReference type="InterPro" id="IPR007081">
    <property type="entry name" value="RNA_pol_Rpb1_5"/>
</dbReference>
<dbReference type="InterPro" id="IPR044893">
    <property type="entry name" value="RNA_pol_Rpb1_clamp_domain"/>
</dbReference>
<dbReference type="InterPro" id="IPR038120">
    <property type="entry name" value="Rpb1_funnel_sf"/>
</dbReference>
<dbReference type="NCBIfam" id="TIGR02386">
    <property type="entry name" value="rpoC_TIGR"/>
    <property type="match status" value="1"/>
</dbReference>
<dbReference type="PANTHER" id="PTHR19376">
    <property type="entry name" value="DNA-DIRECTED RNA POLYMERASE"/>
    <property type="match status" value="1"/>
</dbReference>
<dbReference type="PANTHER" id="PTHR19376:SF54">
    <property type="entry name" value="DNA-DIRECTED RNA POLYMERASE SUBUNIT BETA"/>
    <property type="match status" value="1"/>
</dbReference>
<dbReference type="Pfam" id="PF04997">
    <property type="entry name" value="RNA_pol_Rpb1_1"/>
    <property type="match status" value="1"/>
</dbReference>
<dbReference type="Pfam" id="PF00623">
    <property type="entry name" value="RNA_pol_Rpb1_2"/>
    <property type="match status" value="1"/>
</dbReference>
<dbReference type="Pfam" id="PF04983">
    <property type="entry name" value="RNA_pol_Rpb1_3"/>
    <property type="match status" value="1"/>
</dbReference>
<dbReference type="Pfam" id="PF05000">
    <property type="entry name" value="RNA_pol_Rpb1_4"/>
    <property type="match status" value="1"/>
</dbReference>
<dbReference type="Pfam" id="PF04998">
    <property type="entry name" value="RNA_pol_Rpb1_5"/>
    <property type="match status" value="1"/>
</dbReference>
<dbReference type="SMART" id="SM00663">
    <property type="entry name" value="RPOLA_N"/>
    <property type="match status" value="1"/>
</dbReference>
<dbReference type="SUPFAM" id="SSF64484">
    <property type="entry name" value="beta and beta-prime subunits of DNA dependent RNA-polymerase"/>
    <property type="match status" value="1"/>
</dbReference>
<proteinExistence type="inferred from homology"/>
<keyword id="KW-0240">DNA-directed RNA polymerase</keyword>
<keyword id="KW-0460">Magnesium</keyword>
<keyword id="KW-0479">Metal-binding</keyword>
<keyword id="KW-0548">Nucleotidyltransferase</keyword>
<keyword id="KW-0804">Transcription</keyword>
<keyword id="KW-0808">Transferase</keyword>
<keyword id="KW-0862">Zinc</keyword>
<comment type="function">
    <text evidence="1">DNA-dependent RNA polymerase catalyzes the transcription of DNA into RNA using the four ribonucleoside triphosphates as substrates.</text>
</comment>
<comment type="catalytic activity">
    <reaction evidence="1">
        <text>RNA(n) + a ribonucleoside 5'-triphosphate = RNA(n+1) + diphosphate</text>
        <dbReference type="Rhea" id="RHEA:21248"/>
        <dbReference type="Rhea" id="RHEA-COMP:14527"/>
        <dbReference type="Rhea" id="RHEA-COMP:17342"/>
        <dbReference type="ChEBI" id="CHEBI:33019"/>
        <dbReference type="ChEBI" id="CHEBI:61557"/>
        <dbReference type="ChEBI" id="CHEBI:140395"/>
        <dbReference type="EC" id="2.7.7.6"/>
    </reaction>
</comment>
<comment type="cofactor">
    <cofactor evidence="1">
        <name>Mg(2+)</name>
        <dbReference type="ChEBI" id="CHEBI:18420"/>
    </cofactor>
    <text evidence="1">Binds 1 Mg(2+) ion per subunit.</text>
</comment>
<comment type="cofactor">
    <cofactor evidence="1">
        <name>Zn(2+)</name>
        <dbReference type="ChEBI" id="CHEBI:29105"/>
    </cofactor>
    <text evidence="1">Binds 2 Zn(2+) ions per subunit.</text>
</comment>
<comment type="subunit">
    <text evidence="1">The RNAP catalytic core consists of 2 alpha, 1 beta, 1 beta' and 1 omega subunit. When a sigma factor is associated with the core the holoenzyme is formed, which can initiate transcription.</text>
</comment>
<comment type="similarity">
    <text evidence="1">Belongs to the RNA polymerase beta' chain family.</text>
</comment>
<reference key="1">
    <citation type="journal article" date="2007" name="Nat. Genet.">
        <title>Genomic analysis of Bartonella identifies type IV secretion systems as host adaptability factors.</title>
        <authorList>
            <person name="Saenz H.L."/>
            <person name="Engel P."/>
            <person name="Stoeckli M.C."/>
            <person name="Lanz C."/>
            <person name="Raddatz G."/>
            <person name="Vayssier-Taussat M."/>
            <person name="Birtles R."/>
            <person name="Schuster S.C."/>
            <person name="Dehio C."/>
        </authorList>
    </citation>
    <scope>NUCLEOTIDE SEQUENCE [LARGE SCALE GENOMIC DNA]</scope>
    <source>
        <strain>CIP 105476 / IBS 506</strain>
    </source>
</reference>
<name>RPOC_BART1</name>